<evidence type="ECO:0000255" key="1">
    <source>
        <dbReference type="HAMAP-Rule" id="MF_00760"/>
    </source>
</evidence>
<name>Y1450_STAA1</name>
<protein>
    <recommendedName>
        <fullName evidence="1">UPF0302 protein SAHV_1450</fullName>
    </recommendedName>
</protein>
<feature type="chain" id="PRO_1000046730" description="UPF0302 protein SAHV_1450">
    <location>
        <begin position="1"/>
        <end position="191"/>
    </location>
</feature>
<reference key="1">
    <citation type="journal article" date="2008" name="Antimicrob. Agents Chemother.">
        <title>Mutated response regulator graR is responsible for phenotypic conversion of Staphylococcus aureus from heterogeneous vancomycin-intermediate resistance to vancomycin-intermediate resistance.</title>
        <authorList>
            <person name="Neoh H.-M."/>
            <person name="Cui L."/>
            <person name="Yuzawa H."/>
            <person name="Takeuchi F."/>
            <person name="Matsuo M."/>
            <person name="Hiramatsu K."/>
        </authorList>
    </citation>
    <scope>NUCLEOTIDE SEQUENCE [LARGE SCALE GENOMIC DNA]</scope>
    <source>
        <strain>Mu3 / ATCC 700698</strain>
    </source>
</reference>
<proteinExistence type="inferred from homology"/>
<sequence>MSETLNQIKESFIEYLLFQYRFKSRIAVWVLNYIKVNEAKLANIHFVDTKINHHETLEIAEVGSHASAIQFTKRNIKLMNTNEIFDYIANHNCAFDIQIHFANVSKREQRLDDLIVAQLTESPSYQTYLHDLNSMAIDRHKHALLIDYLLHNIDLSLQMNEKQRFYQLTQILNTLKLVNKHNQFEDLADDD</sequence>
<accession>A7X2G1</accession>
<comment type="similarity">
    <text evidence="1">Belongs to the UPF0302 family.</text>
</comment>
<dbReference type="EMBL" id="AP009324">
    <property type="protein sequence ID" value="BAF78333.1"/>
    <property type="molecule type" value="Genomic_DNA"/>
</dbReference>
<dbReference type="RefSeq" id="WP_000005212.1">
    <property type="nucleotide sequence ID" value="NC_009782.1"/>
</dbReference>
<dbReference type="SMR" id="A7X2G1"/>
<dbReference type="KEGG" id="saw:SAHV_1450"/>
<dbReference type="HOGENOM" id="CLU_122408_0_0_9"/>
<dbReference type="Gene3D" id="3.40.1530.30">
    <property type="entry name" value="Uncharacterised family UPF0302, N-terminal domain"/>
    <property type="match status" value="1"/>
</dbReference>
<dbReference type="HAMAP" id="MF_00760">
    <property type="entry name" value="UPF0302"/>
    <property type="match status" value="1"/>
</dbReference>
<dbReference type="InterPro" id="IPR014957">
    <property type="entry name" value="IDEAL_dom"/>
</dbReference>
<dbReference type="InterPro" id="IPR011188">
    <property type="entry name" value="UPF0302"/>
</dbReference>
<dbReference type="InterPro" id="IPR014963">
    <property type="entry name" value="UPF0302_N"/>
</dbReference>
<dbReference type="InterPro" id="IPR038091">
    <property type="entry name" value="UPF0302_N_sf"/>
</dbReference>
<dbReference type="Pfam" id="PF08858">
    <property type="entry name" value="IDEAL"/>
    <property type="match status" value="1"/>
</dbReference>
<dbReference type="Pfam" id="PF08864">
    <property type="entry name" value="UPF0302"/>
    <property type="match status" value="1"/>
</dbReference>
<dbReference type="PIRSF" id="PIRSF007165">
    <property type="entry name" value="UCP007165"/>
    <property type="match status" value="1"/>
</dbReference>
<dbReference type="SMART" id="SM00914">
    <property type="entry name" value="IDEAL"/>
    <property type="match status" value="1"/>
</dbReference>
<organism>
    <name type="scientific">Staphylococcus aureus (strain Mu3 / ATCC 700698)</name>
    <dbReference type="NCBI Taxonomy" id="418127"/>
    <lineage>
        <taxon>Bacteria</taxon>
        <taxon>Bacillati</taxon>
        <taxon>Bacillota</taxon>
        <taxon>Bacilli</taxon>
        <taxon>Bacillales</taxon>
        <taxon>Staphylococcaceae</taxon>
        <taxon>Staphylococcus</taxon>
    </lineage>
</organism>
<gene>
    <name type="ordered locus">SAHV_1450</name>
</gene>